<keyword id="KW-0233">DNA recombination</keyword>
<keyword id="KW-0238">DNA-binding</keyword>
<keyword id="KW-1185">Reference proteome</keyword>
<keyword id="KW-0804">Transcription</keyword>
<keyword id="KW-0805">Transcription regulation</keyword>
<keyword id="KW-0810">Translation regulation</keyword>
<protein>
    <recommendedName>
        <fullName evidence="1">Integration host factor subunit alpha</fullName>
        <shortName evidence="1">IHF-alpha</shortName>
    </recommendedName>
</protein>
<organism>
    <name type="scientific">Hahella chejuensis (strain KCTC 2396)</name>
    <dbReference type="NCBI Taxonomy" id="349521"/>
    <lineage>
        <taxon>Bacteria</taxon>
        <taxon>Pseudomonadati</taxon>
        <taxon>Pseudomonadota</taxon>
        <taxon>Gammaproteobacteria</taxon>
        <taxon>Oceanospirillales</taxon>
        <taxon>Hahellaceae</taxon>
        <taxon>Hahella</taxon>
    </lineage>
</organism>
<gene>
    <name evidence="1" type="primary">ihfA</name>
    <name evidence="1" type="synonym">himA</name>
    <name type="ordered locus">HCH_04573</name>
</gene>
<accession>Q2SDJ8</accession>
<comment type="function">
    <text evidence="1">This protein is one of the two subunits of integration host factor, a specific DNA-binding protein that functions in genetic recombination as well as in transcriptional and translational control.</text>
</comment>
<comment type="subunit">
    <text evidence="1">Heterodimer of an alpha and a beta chain.</text>
</comment>
<comment type="similarity">
    <text evidence="1">Belongs to the bacterial histone-like protein family.</text>
</comment>
<feature type="chain" id="PRO_0000277734" description="Integration host factor subunit alpha">
    <location>
        <begin position="1"/>
        <end position="100"/>
    </location>
</feature>
<reference key="1">
    <citation type="journal article" date="2005" name="Nucleic Acids Res.">
        <title>Genomic blueprint of Hahella chejuensis, a marine microbe producing an algicidal agent.</title>
        <authorList>
            <person name="Jeong H."/>
            <person name="Yim J.H."/>
            <person name="Lee C."/>
            <person name="Choi S.-H."/>
            <person name="Park Y.K."/>
            <person name="Yoon S.H."/>
            <person name="Hur C.-G."/>
            <person name="Kang H.-Y."/>
            <person name="Kim D."/>
            <person name="Lee H.H."/>
            <person name="Park K.H."/>
            <person name="Park S.-H."/>
            <person name="Park H.-S."/>
            <person name="Lee H.K."/>
            <person name="Oh T.K."/>
            <person name="Kim J.F."/>
        </authorList>
    </citation>
    <scope>NUCLEOTIDE SEQUENCE [LARGE SCALE GENOMIC DNA]</scope>
    <source>
        <strain>KCTC 2396</strain>
    </source>
</reference>
<evidence type="ECO:0000255" key="1">
    <source>
        <dbReference type="HAMAP-Rule" id="MF_00380"/>
    </source>
</evidence>
<dbReference type="EMBL" id="CP000155">
    <property type="protein sequence ID" value="ABC31276.1"/>
    <property type="molecule type" value="Genomic_DNA"/>
</dbReference>
<dbReference type="RefSeq" id="WP_011398341.1">
    <property type="nucleotide sequence ID" value="NC_007645.1"/>
</dbReference>
<dbReference type="SMR" id="Q2SDJ8"/>
<dbReference type="STRING" id="349521.HCH_04573"/>
<dbReference type="KEGG" id="hch:HCH_04573"/>
<dbReference type="eggNOG" id="COG0776">
    <property type="taxonomic scope" value="Bacteria"/>
</dbReference>
<dbReference type="HOGENOM" id="CLU_105066_1_3_6"/>
<dbReference type="OrthoDB" id="9797747at2"/>
<dbReference type="Proteomes" id="UP000000238">
    <property type="component" value="Chromosome"/>
</dbReference>
<dbReference type="GO" id="GO:0005829">
    <property type="term" value="C:cytosol"/>
    <property type="evidence" value="ECO:0007669"/>
    <property type="project" value="TreeGrafter"/>
</dbReference>
<dbReference type="GO" id="GO:0003677">
    <property type="term" value="F:DNA binding"/>
    <property type="evidence" value="ECO:0007669"/>
    <property type="project" value="UniProtKB-UniRule"/>
</dbReference>
<dbReference type="GO" id="GO:0030527">
    <property type="term" value="F:structural constituent of chromatin"/>
    <property type="evidence" value="ECO:0007669"/>
    <property type="project" value="InterPro"/>
</dbReference>
<dbReference type="GO" id="GO:0006310">
    <property type="term" value="P:DNA recombination"/>
    <property type="evidence" value="ECO:0007669"/>
    <property type="project" value="UniProtKB-UniRule"/>
</dbReference>
<dbReference type="GO" id="GO:0009893">
    <property type="term" value="P:positive regulation of metabolic process"/>
    <property type="evidence" value="ECO:0007669"/>
    <property type="project" value="UniProtKB-ARBA"/>
</dbReference>
<dbReference type="GO" id="GO:0006355">
    <property type="term" value="P:regulation of DNA-templated transcription"/>
    <property type="evidence" value="ECO:0007669"/>
    <property type="project" value="UniProtKB-UniRule"/>
</dbReference>
<dbReference type="GO" id="GO:0006417">
    <property type="term" value="P:regulation of translation"/>
    <property type="evidence" value="ECO:0007669"/>
    <property type="project" value="UniProtKB-UniRule"/>
</dbReference>
<dbReference type="CDD" id="cd13835">
    <property type="entry name" value="IHF_A"/>
    <property type="match status" value="1"/>
</dbReference>
<dbReference type="FunFam" id="4.10.520.10:FF:000002">
    <property type="entry name" value="Integration host factor subunit alpha"/>
    <property type="match status" value="1"/>
</dbReference>
<dbReference type="Gene3D" id="4.10.520.10">
    <property type="entry name" value="IHF-like DNA-binding proteins"/>
    <property type="match status" value="1"/>
</dbReference>
<dbReference type="HAMAP" id="MF_00380">
    <property type="entry name" value="IHF_alpha"/>
    <property type="match status" value="1"/>
</dbReference>
<dbReference type="InterPro" id="IPR000119">
    <property type="entry name" value="Hist_DNA-bd"/>
</dbReference>
<dbReference type="InterPro" id="IPR020816">
    <property type="entry name" value="Histone-like_DNA-bd_CS"/>
</dbReference>
<dbReference type="InterPro" id="IPR010992">
    <property type="entry name" value="IHF-like_DNA-bd_dom_sf"/>
</dbReference>
<dbReference type="InterPro" id="IPR005684">
    <property type="entry name" value="IHF_alpha"/>
</dbReference>
<dbReference type="NCBIfam" id="TIGR00987">
    <property type="entry name" value="himA"/>
    <property type="match status" value="1"/>
</dbReference>
<dbReference type="NCBIfam" id="NF001401">
    <property type="entry name" value="PRK00285.1"/>
    <property type="match status" value="1"/>
</dbReference>
<dbReference type="PANTHER" id="PTHR33175">
    <property type="entry name" value="DNA-BINDING PROTEIN HU"/>
    <property type="match status" value="1"/>
</dbReference>
<dbReference type="PANTHER" id="PTHR33175:SF2">
    <property type="entry name" value="INTEGRATION HOST FACTOR SUBUNIT ALPHA"/>
    <property type="match status" value="1"/>
</dbReference>
<dbReference type="Pfam" id="PF00216">
    <property type="entry name" value="Bac_DNA_binding"/>
    <property type="match status" value="1"/>
</dbReference>
<dbReference type="PRINTS" id="PR01727">
    <property type="entry name" value="DNABINDINGHU"/>
</dbReference>
<dbReference type="SMART" id="SM00411">
    <property type="entry name" value="BHL"/>
    <property type="match status" value="1"/>
</dbReference>
<dbReference type="SUPFAM" id="SSF47729">
    <property type="entry name" value="IHF-like DNA-binding proteins"/>
    <property type="match status" value="1"/>
</dbReference>
<dbReference type="PROSITE" id="PS00045">
    <property type="entry name" value="HISTONE_LIKE"/>
    <property type="match status" value="1"/>
</dbReference>
<name>IHFA_HAHCH</name>
<proteinExistence type="inferred from homology"/>
<sequence>MGALTKADMAERLYQEVGLNKREAKEMVEAFFDEVRDALSHNEQVKLSGFGNFDLRDKKQRPGRNPKTGEEIPITARRVVTFRPGQKLKAKVEAYAGTQS</sequence>